<accession>P40961</accession>
<accession>D6VUR4</accession>
<proteinExistence type="evidence at protein level"/>
<organism>
    <name type="scientific">Saccharomyces cerevisiae (strain ATCC 204508 / S288c)</name>
    <name type="common">Baker's yeast</name>
    <dbReference type="NCBI Taxonomy" id="559292"/>
    <lineage>
        <taxon>Eukaryota</taxon>
        <taxon>Fungi</taxon>
        <taxon>Dikarya</taxon>
        <taxon>Ascomycota</taxon>
        <taxon>Saccharomycotina</taxon>
        <taxon>Saccharomycetes</taxon>
        <taxon>Saccharomycetales</taxon>
        <taxon>Saccharomycetaceae</taxon>
        <taxon>Saccharomyces</taxon>
    </lineage>
</organism>
<keyword id="KW-0175">Coiled coil</keyword>
<keyword id="KW-0472">Membrane</keyword>
<keyword id="KW-0496">Mitochondrion</keyword>
<keyword id="KW-0999">Mitochondrion inner membrane</keyword>
<keyword id="KW-1185">Reference proteome</keyword>
<reference key="1">
    <citation type="submission" date="1994-10" db="EMBL/GenBank/DDBJ databases">
        <title>The yeast homolog of human prohibitin determines replicative life span.</title>
        <authorList>
            <person name="Franklin D.S."/>
            <person name="Stewart D.A."/>
            <person name="Owens G.A."/>
            <person name="Danner D.B."/>
            <person name="Jazwinski S.M."/>
        </authorList>
    </citation>
    <scope>NUCLEOTIDE SEQUENCE [GENOMIC DNA]</scope>
    <source>
        <strain>ATCC 204508 / S288c</strain>
    </source>
</reference>
<reference key="2">
    <citation type="journal article" date="1997" name="Nature">
        <title>The nucleotide sequence of Saccharomyces cerevisiae chromosome VII.</title>
        <authorList>
            <person name="Tettelin H."/>
            <person name="Agostoni-Carbone M.L."/>
            <person name="Albermann K."/>
            <person name="Albers M."/>
            <person name="Arroyo J."/>
            <person name="Backes U."/>
            <person name="Barreiros T."/>
            <person name="Bertani I."/>
            <person name="Bjourson A.J."/>
            <person name="Brueckner M."/>
            <person name="Bruschi C.V."/>
            <person name="Carignani G."/>
            <person name="Castagnoli L."/>
            <person name="Cerdan E."/>
            <person name="Clemente M.L."/>
            <person name="Coblenz A."/>
            <person name="Coglievina M."/>
            <person name="Coissac E."/>
            <person name="Defoor E."/>
            <person name="Del Bino S."/>
            <person name="Delius H."/>
            <person name="Delneri D."/>
            <person name="de Wergifosse P."/>
            <person name="Dujon B."/>
            <person name="Durand P."/>
            <person name="Entian K.-D."/>
            <person name="Eraso P."/>
            <person name="Escribano V."/>
            <person name="Fabiani L."/>
            <person name="Fartmann B."/>
            <person name="Feroli F."/>
            <person name="Feuermann M."/>
            <person name="Frontali L."/>
            <person name="Garcia-Gonzalez M."/>
            <person name="Garcia-Saez M.I."/>
            <person name="Goffeau A."/>
            <person name="Guerreiro P."/>
            <person name="Hani J."/>
            <person name="Hansen M."/>
            <person name="Hebling U."/>
            <person name="Hernandez K."/>
            <person name="Heumann K."/>
            <person name="Hilger F."/>
            <person name="Hofmann B."/>
            <person name="Indge K.J."/>
            <person name="James C.M."/>
            <person name="Klima R."/>
            <person name="Koetter P."/>
            <person name="Kramer B."/>
            <person name="Kramer W."/>
            <person name="Lauquin G."/>
            <person name="Leuther H."/>
            <person name="Louis E.J."/>
            <person name="Maillier E."/>
            <person name="Marconi A."/>
            <person name="Martegani E."/>
            <person name="Mazon M.J."/>
            <person name="Mazzoni C."/>
            <person name="McReynolds A.D.K."/>
            <person name="Melchioretto P."/>
            <person name="Mewes H.-W."/>
            <person name="Minenkova O."/>
            <person name="Mueller-Auer S."/>
            <person name="Nawrocki A."/>
            <person name="Netter P."/>
            <person name="Neu R."/>
            <person name="Nombela C."/>
            <person name="Oliver S.G."/>
            <person name="Panzeri L."/>
            <person name="Paoluzi S."/>
            <person name="Plevani P."/>
            <person name="Portetelle D."/>
            <person name="Portillo F."/>
            <person name="Potier S."/>
            <person name="Purnelle B."/>
            <person name="Rieger M."/>
            <person name="Riles L."/>
            <person name="Rinaldi T."/>
            <person name="Robben J."/>
            <person name="Rodrigues-Pousada C."/>
            <person name="Rodriguez-Belmonte E."/>
            <person name="Rodriguez-Torres A.M."/>
            <person name="Rose M."/>
            <person name="Ruzzi M."/>
            <person name="Saliola M."/>
            <person name="Sanchez-Perez M."/>
            <person name="Schaefer B."/>
            <person name="Schaefer M."/>
            <person name="Scharfe M."/>
            <person name="Schmidheini T."/>
            <person name="Schreer A."/>
            <person name="Skala J."/>
            <person name="Souciet J.-L."/>
            <person name="Steensma H.Y."/>
            <person name="Talla E."/>
            <person name="Thierry A."/>
            <person name="Vandenbol M."/>
            <person name="van der Aart Q.J.M."/>
            <person name="Van Dyck L."/>
            <person name="Vanoni M."/>
            <person name="Verhasselt P."/>
            <person name="Voet M."/>
            <person name="Volckaert G."/>
            <person name="Wambutt R."/>
            <person name="Watson M.D."/>
            <person name="Weber N."/>
            <person name="Wedler E."/>
            <person name="Wedler H."/>
            <person name="Wipfli P."/>
            <person name="Wolf K."/>
            <person name="Wright L.F."/>
            <person name="Zaccaria P."/>
            <person name="Zimmermann M."/>
            <person name="Zollner A."/>
            <person name="Kleine K."/>
        </authorList>
    </citation>
    <scope>NUCLEOTIDE SEQUENCE [LARGE SCALE GENOMIC DNA]</scope>
    <source>
        <strain>ATCC 204508 / S288c</strain>
    </source>
</reference>
<reference key="3">
    <citation type="journal article" date="2014" name="G3 (Bethesda)">
        <title>The reference genome sequence of Saccharomyces cerevisiae: Then and now.</title>
        <authorList>
            <person name="Engel S.R."/>
            <person name="Dietrich F.S."/>
            <person name="Fisk D.G."/>
            <person name="Binkley G."/>
            <person name="Balakrishnan R."/>
            <person name="Costanzo M.C."/>
            <person name="Dwight S.S."/>
            <person name="Hitz B.C."/>
            <person name="Karra K."/>
            <person name="Nash R.S."/>
            <person name="Weng S."/>
            <person name="Wong E.D."/>
            <person name="Lloyd P."/>
            <person name="Skrzypek M.S."/>
            <person name="Miyasato S.R."/>
            <person name="Simison M."/>
            <person name="Cherry J.M."/>
        </authorList>
    </citation>
    <scope>GENOME REANNOTATION</scope>
    <source>
        <strain>ATCC 204508 / S288c</strain>
    </source>
</reference>
<reference key="4">
    <citation type="journal article" date="2007" name="Genome Res.">
        <title>Approaching a complete repository of sequence-verified protein-encoding clones for Saccharomyces cerevisiae.</title>
        <authorList>
            <person name="Hu Y."/>
            <person name="Rolfs A."/>
            <person name="Bhullar B."/>
            <person name="Murthy T.V.S."/>
            <person name="Zhu C."/>
            <person name="Berger M.F."/>
            <person name="Camargo A.A."/>
            <person name="Kelley F."/>
            <person name="McCarron S."/>
            <person name="Jepson D."/>
            <person name="Richardson A."/>
            <person name="Raphael J."/>
            <person name="Moreira D."/>
            <person name="Taycher E."/>
            <person name="Zuo D."/>
            <person name="Mohr S."/>
            <person name="Kane M.F."/>
            <person name="Williamson J."/>
            <person name="Simpson A.J.G."/>
            <person name="Bulyk M.L."/>
            <person name="Harlow E."/>
            <person name="Marsischky G."/>
            <person name="Kolodner R.D."/>
            <person name="LaBaer J."/>
        </authorList>
    </citation>
    <scope>NUCLEOTIDE SEQUENCE [GENOMIC DNA]</scope>
    <source>
        <strain>ATCC 204508 / S288c</strain>
    </source>
</reference>
<reference key="5">
    <citation type="journal article" date="2000" name="EMBO J.">
        <title>Prohibitins act as a membrane-bound chaperone for the stabilization of mitochondrial proteins.</title>
        <authorList>
            <person name="Nijtmans L.G.J."/>
            <person name="de Jong L."/>
            <person name="Artal-Sanz M."/>
            <person name="Coates P.J."/>
            <person name="Berden J.A."/>
            <person name="Back J.W."/>
            <person name="Muijsers A.O."/>
            <person name="van der Spek H."/>
            <person name="Grivell L.A."/>
        </authorList>
    </citation>
    <scope>FUNCTION</scope>
    <scope>SUBUNIT</scope>
</reference>
<reference key="6">
    <citation type="journal article" date="2002" name="Protein Sci.">
        <title>A structure for the yeast prohibitin complex: structure prediction and evidence from chemical crosslinking and mass spectrometry.</title>
        <authorList>
            <person name="Back J.W."/>
            <person name="Artal-Sanz M."/>
            <person name="De Jong L."/>
            <person name="De Koning L.J."/>
            <person name="Nijtmans L.G.J."/>
            <person name="De Koster C.G."/>
            <person name="Grivell L.A."/>
            <person name="Van Der Spek H."/>
            <person name="Muijsers A.O."/>
        </authorList>
    </citation>
    <scope>SUBUNIT</scope>
</reference>
<reference key="7">
    <citation type="journal article" date="2003" name="Nature">
        <title>Global analysis of protein localization in budding yeast.</title>
        <authorList>
            <person name="Huh W.-K."/>
            <person name="Falvo J.V."/>
            <person name="Gerke L.C."/>
            <person name="Carroll A.S."/>
            <person name="Howson R.W."/>
            <person name="Weissman J.S."/>
            <person name="O'Shea E.K."/>
        </authorList>
    </citation>
    <scope>SUBCELLULAR LOCATION [LARGE SCALE ANALYSIS]</scope>
</reference>
<reference key="8">
    <citation type="journal article" date="2003" name="Nature">
        <title>Global analysis of protein expression in yeast.</title>
        <authorList>
            <person name="Ghaemmaghami S."/>
            <person name="Huh W.-K."/>
            <person name="Bower K."/>
            <person name="Howson R.W."/>
            <person name="Belle A."/>
            <person name="Dephoure N."/>
            <person name="O'Shea E.K."/>
            <person name="Weissman J.S."/>
        </authorList>
    </citation>
    <scope>LEVEL OF PROTEIN EXPRESSION [LARGE SCALE ANALYSIS]</scope>
</reference>
<reference key="9">
    <citation type="journal article" date="2003" name="Proc. Natl. Acad. Sci. U.S.A.">
        <title>The proteome of Saccharomyces cerevisiae mitochondria.</title>
        <authorList>
            <person name="Sickmann A."/>
            <person name="Reinders J."/>
            <person name="Wagner Y."/>
            <person name="Joppich C."/>
            <person name="Zahedi R.P."/>
            <person name="Meyer H.E."/>
            <person name="Schoenfisch B."/>
            <person name="Perschil I."/>
            <person name="Chacinska A."/>
            <person name="Guiard B."/>
            <person name="Rehling P."/>
            <person name="Pfanner N."/>
            <person name="Meisinger C."/>
        </authorList>
    </citation>
    <scope>SUBCELLULAR LOCATION [LARGE SCALE ANALYSIS]</scope>
    <source>
        <strain>ATCC 76625 / YPH499</strain>
    </source>
</reference>
<reference key="10">
    <citation type="journal article" date="1999" name="Mol. Cell. Biol.">
        <title>Prohibitins regulate membrane protein degradation by the m-AAA protease in mitochondria.</title>
        <authorList>
            <person name="Steglich G."/>
            <person name="Neupert W."/>
            <person name="Langer T."/>
        </authorList>
    </citation>
    <scope>FUNCTION</scope>
    <scope>SUBCELLULAR LOCATION</scope>
    <scope>INTERACTION WITH THE M-AAA PROTEASE COMPLEX</scope>
</reference>
<reference key="11">
    <citation type="journal article" date="2019" name="IScience">
        <title>Structural Basis of Mitochondrial Scaffolds by Prohibitin Complexes: Insight into a Role of the Coiled-Coil Region.</title>
        <authorList>
            <person name="Yoshinaka T."/>
            <person name="Kosako H."/>
            <person name="Yoshizumi T."/>
            <person name="Furukawa R."/>
            <person name="Hirano Y."/>
            <person name="Kuge O."/>
            <person name="Tamada T."/>
            <person name="Koshiba T."/>
        </authorList>
    </citation>
    <scope>MUTAGENESIS OF VAL-202; VAL-213 AND 217-GLU--GLU-221</scope>
</reference>
<reference key="12">
    <citation type="journal article" date="2024" name="Autophagy">
        <title>Prohibitins, Phb1 and Phb2, function as Atg8 receptors to support yeast mitophagy and also play a negative regulatory role in Atg32 processing.</title>
        <authorList>
            <person name="Garcia-Chavez D."/>
            <person name="Dominguez-Martin E."/>
            <person name="Kawasaki L."/>
            <person name="Ongay-Larios L."/>
            <person name="Ruelas-Ramirez H."/>
            <person name="Mendoza-Martinez A.E."/>
            <person name="Pardo J.P."/>
            <person name="Funes S."/>
            <person name="Coria R."/>
        </authorList>
    </citation>
    <scope>FUNCTION</scope>
    <scope>INTERACTION WITH ATG8</scope>
    <scope>SUBCELLULAR LOCATION</scope>
    <scope>DISRUPTION PHENOTYPE</scope>
    <scope>MUTAGENESIS OF 109-TYR--LEU-112</scope>
</reference>
<reference key="13">
    <citation type="journal article" date="2005" name="Mol. Biol. Cell">
        <title>Formation of membrane-bound ring complexes by prohibitins in mitochondria.</title>
        <authorList>
            <person name="Tatsuta T."/>
            <person name="Model K."/>
            <person name="Langer T."/>
        </authorList>
    </citation>
    <scope>SINGLE PARTICLE ELECTRON MICROSCOPY</scope>
    <scope>SUBCELLULAR LOCATION</scope>
    <scope>COILED-COIL DOMAIN</scope>
</reference>
<name>PHB1_YEAST</name>
<evidence type="ECO:0000256" key="1">
    <source>
        <dbReference type="SAM" id="MobiDB-lite"/>
    </source>
</evidence>
<evidence type="ECO:0000269" key="2">
    <source>
    </source>
</evidence>
<evidence type="ECO:0000269" key="3">
    <source>
    </source>
</evidence>
<evidence type="ECO:0000269" key="4">
    <source>
    </source>
</evidence>
<evidence type="ECO:0000269" key="5">
    <source>
    </source>
</evidence>
<evidence type="ECO:0000269" key="6">
    <source>
    </source>
</evidence>
<evidence type="ECO:0000269" key="7">
    <source>
    </source>
</evidence>
<evidence type="ECO:0000269" key="8">
    <source>
    </source>
</evidence>
<evidence type="ECO:0000269" key="9">
    <source>
    </source>
</evidence>
<evidence type="ECO:0000269" key="10">
    <source>
    </source>
</evidence>
<evidence type="ECO:0000305" key="11"/>
<evidence type="ECO:0000305" key="12">
    <source>
    </source>
</evidence>
<dbReference type="EMBL" id="U16737">
    <property type="protein sequence ID" value="AAA53144.1"/>
    <property type="molecule type" value="Genomic_DNA"/>
</dbReference>
<dbReference type="EMBL" id="Z72917">
    <property type="protein sequence ID" value="CAA97145.1"/>
    <property type="molecule type" value="Genomic_DNA"/>
</dbReference>
<dbReference type="EMBL" id="AY558096">
    <property type="protein sequence ID" value="AAS56422.1"/>
    <property type="molecule type" value="Genomic_DNA"/>
</dbReference>
<dbReference type="EMBL" id="BK006941">
    <property type="protein sequence ID" value="DAA08225.1"/>
    <property type="molecule type" value="Genomic_DNA"/>
</dbReference>
<dbReference type="PIR" id="S64441">
    <property type="entry name" value="S64441"/>
</dbReference>
<dbReference type="RefSeq" id="NP_011648.3">
    <property type="nucleotide sequence ID" value="NM_001181261.3"/>
</dbReference>
<dbReference type="SMR" id="P40961"/>
<dbReference type="BioGRID" id="33380">
    <property type="interactions" value="255"/>
</dbReference>
<dbReference type="ComplexPortal" id="CPX-1703">
    <property type="entry name" value="Prohibitin complex"/>
</dbReference>
<dbReference type="DIP" id="DIP-6653N"/>
<dbReference type="FunCoup" id="P40961">
    <property type="interactions" value="1065"/>
</dbReference>
<dbReference type="IntAct" id="P40961">
    <property type="interactions" value="49"/>
</dbReference>
<dbReference type="MINT" id="P40961"/>
<dbReference type="STRING" id="4932.YGR132C"/>
<dbReference type="iPTMnet" id="P40961"/>
<dbReference type="PaxDb" id="4932-YGR132C"/>
<dbReference type="PeptideAtlas" id="P40961"/>
<dbReference type="TopDownProteomics" id="P40961"/>
<dbReference type="EnsemblFungi" id="YGR132C_mRNA">
    <property type="protein sequence ID" value="YGR132C"/>
    <property type="gene ID" value="YGR132C"/>
</dbReference>
<dbReference type="GeneID" id="853033"/>
<dbReference type="KEGG" id="sce:YGR132C"/>
<dbReference type="AGR" id="SGD:S000003364"/>
<dbReference type="SGD" id="S000003364">
    <property type="gene designation" value="PHB1"/>
</dbReference>
<dbReference type="VEuPathDB" id="FungiDB:YGR132C"/>
<dbReference type="eggNOG" id="KOG3083">
    <property type="taxonomic scope" value="Eukaryota"/>
</dbReference>
<dbReference type="GeneTree" id="ENSGT00950000183070"/>
<dbReference type="HOGENOM" id="CLU_047969_0_0_1"/>
<dbReference type="InParanoid" id="P40961"/>
<dbReference type="OMA" id="YEFRLVT"/>
<dbReference type="OrthoDB" id="275637at2759"/>
<dbReference type="BioCyc" id="YEAST:G3O-30838-MONOMER"/>
<dbReference type="BioGRID-ORCS" id="853033">
    <property type="hits" value="3 hits in 10 CRISPR screens"/>
</dbReference>
<dbReference type="PRO" id="PR:P40961"/>
<dbReference type="Proteomes" id="UP000002311">
    <property type="component" value="Chromosome VII"/>
</dbReference>
<dbReference type="RNAct" id="P40961">
    <property type="molecule type" value="protein"/>
</dbReference>
<dbReference type="GO" id="GO:0005743">
    <property type="term" value="C:mitochondrial inner membrane"/>
    <property type="evidence" value="ECO:0000314"/>
    <property type="project" value="SGD"/>
</dbReference>
<dbReference type="GO" id="GO:0035632">
    <property type="term" value="C:mitochondrial prohibitin complex"/>
    <property type="evidence" value="ECO:0000353"/>
    <property type="project" value="ComplexPortal"/>
</dbReference>
<dbReference type="GO" id="GO:0005739">
    <property type="term" value="C:mitochondrion"/>
    <property type="evidence" value="ECO:0000314"/>
    <property type="project" value="SGD"/>
</dbReference>
<dbReference type="GO" id="GO:0007007">
    <property type="term" value="P:inner mitochondrial membrane organization"/>
    <property type="evidence" value="ECO:0000315"/>
    <property type="project" value="SGD"/>
</dbReference>
<dbReference type="GO" id="GO:0000001">
    <property type="term" value="P:mitochondrion inheritance"/>
    <property type="evidence" value="ECO:0000315"/>
    <property type="project" value="SGD"/>
</dbReference>
<dbReference type="GO" id="GO:0007005">
    <property type="term" value="P:mitochondrion organization"/>
    <property type="evidence" value="ECO:0000315"/>
    <property type="project" value="SGD"/>
</dbReference>
<dbReference type="GO" id="GO:0000423">
    <property type="term" value="P:mitophagy"/>
    <property type="evidence" value="ECO:0000315"/>
    <property type="project" value="UniProtKB"/>
</dbReference>
<dbReference type="GO" id="GO:0045861">
    <property type="term" value="P:negative regulation of proteolysis"/>
    <property type="evidence" value="ECO:0000315"/>
    <property type="project" value="SGD"/>
</dbReference>
<dbReference type="GO" id="GO:0006457">
    <property type="term" value="P:protein folding"/>
    <property type="evidence" value="ECO:0000314"/>
    <property type="project" value="SGD"/>
</dbReference>
<dbReference type="GO" id="GO:0050821">
    <property type="term" value="P:protein stabilization"/>
    <property type="evidence" value="ECO:0000303"/>
    <property type="project" value="ComplexPortal"/>
</dbReference>
<dbReference type="GO" id="GO:0061753">
    <property type="term" value="P:substrate localization to autophagosome"/>
    <property type="evidence" value="ECO:0007669"/>
    <property type="project" value="GOC"/>
</dbReference>
<dbReference type="CDD" id="cd03401">
    <property type="entry name" value="SPFH_prohibitin"/>
    <property type="match status" value="1"/>
</dbReference>
<dbReference type="FunFam" id="3.30.479.30:FF:000001">
    <property type="entry name" value="Prohibitin 2"/>
    <property type="match status" value="1"/>
</dbReference>
<dbReference type="Gene3D" id="3.30.479.30">
    <property type="entry name" value="Band 7 domain"/>
    <property type="match status" value="1"/>
</dbReference>
<dbReference type="InterPro" id="IPR001107">
    <property type="entry name" value="Band_7"/>
</dbReference>
<dbReference type="InterPro" id="IPR036013">
    <property type="entry name" value="Band_7/SPFH_dom_sf"/>
</dbReference>
<dbReference type="InterPro" id="IPR000163">
    <property type="entry name" value="Prohibitin"/>
</dbReference>
<dbReference type="PANTHER" id="PTHR23222">
    <property type="entry name" value="PROHIBITIN"/>
    <property type="match status" value="1"/>
</dbReference>
<dbReference type="PANTHER" id="PTHR23222:SF0">
    <property type="entry name" value="PROHIBITIN 1"/>
    <property type="match status" value="1"/>
</dbReference>
<dbReference type="Pfam" id="PF01145">
    <property type="entry name" value="Band_7"/>
    <property type="match status" value="1"/>
</dbReference>
<dbReference type="PRINTS" id="PR00679">
    <property type="entry name" value="PROHIBITIN"/>
</dbReference>
<dbReference type="SMART" id="SM00244">
    <property type="entry name" value="PHB"/>
    <property type="match status" value="1"/>
</dbReference>
<dbReference type="SUPFAM" id="SSF117892">
    <property type="entry name" value="Band 7/SPFH domain"/>
    <property type="match status" value="1"/>
</dbReference>
<feature type="chain" id="PRO_0000213883" description="Prohibitin-1">
    <location>
        <begin position="1"/>
        <end position="287"/>
    </location>
</feature>
<feature type="region of interest" description="Interaction with ATG8" evidence="10">
    <location>
        <begin position="102"/>
        <end position="116"/>
    </location>
</feature>
<feature type="region of interest" description="Disordered" evidence="1">
    <location>
        <begin position="264"/>
        <end position="287"/>
    </location>
</feature>
<feature type="coiled-coil region" evidence="8">
    <location>
        <begin position="180"/>
        <end position="224"/>
    </location>
</feature>
<feature type="short sequence motif" description="AIM" evidence="12">
    <location>
        <begin position="109"/>
        <end position="112"/>
    </location>
</feature>
<feature type="compositionally biased region" description="Low complexity" evidence="1">
    <location>
        <begin position="272"/>
        <end position="287"/>
    </location>
</feature>
<feature type="mutagenesis site" description="Impairs mitophagy." evidence="10">
    <original>YQNL</original>
    <variation>AQNA</variation>
    <location>
        <begin position="109"/>
        <end position="112"/>
    </location>
</feature>
<feature type="mutagenesis site" description="Inviable." evidence="9">
    <original>V</original>
    <variation>P</variation>
    <location>
        <position position="202"/>
    </location>
</feature>
<feature type="mutagenesis site" description="Inviable." evidence="9">
    <original>V</original>
    <variation>P</variation>
    <location>
        <position position="213"/>
    </location>
</feature>
<feature type="mutagenesis site" description="Inviable." evidence="9">
    <original>EGEAE</original>
    <variation>KGKAK</variation>
    <location>
        <begin position="217"/>
        <end position="221"/>
    </location>
</feature>
<feature type="sequence conflict" description="In Ref. 1; AAA53144." evidence="11" ref="1">
    <original>R</original>
    <variation>K</variation>
    <location>
        <position position="43"/>
    </location>
</feature>
<feature type="sequence conflict" description="In Ref. 1; AAA53144." evidence="11" ref="1">
    <original>S</original>
    <variation>G</variation>
    <location>
        <position position="222"/>
    </location>
</feature>
<feature type="sequence conflict" description="In Ref. 1; AAA53144." evidence="11" ref="1">
    <original>F</original>
    <variation>C</variation>
    <location>
        <position position="225"/>
    </location>
</feature>
<sequence length="287" mass="31427">MSNSAKLIDVITKVALPIGIIASGIQYSMYDVKGGSRGVIFDRINGVKQQVVGEGTHFLVPWLQKAIIYDVRTKPKSIATNTGTKDLQMVSLTLRVLHRPEVLQLPAIYQNLGLDYDERVLPSIGNEVLKSIVAQFDAAELITQREIISQKIRKELSTRANEFGIKLEDVSITHMTFGPEFTKAVEQKQIAQQDAERAKFLVEKAEQERQASVIRAEGEAESAEFISKALAKVGDGLLLIRRLEASKDIAQTLANSSNVVYLPSQHSGGGNSESSGSPNSLLLNIGR</sequence>
<gene>
    <name type="primary">PHB1</name>
    <name type="synonym">PHB</name>
    <name type="ordered locus">YGR132C</name>
</gene>
<protein>
    <recommendedName>
        <fullName>Prohibitin-1</fullName>
    </recommendedName>
</protein>
<comment type="function">
    <text evidence="2 3 10">Prohibitin probably acts as a holdase/unfoldase for the stabilization of newly synthesized mitochondrial proteins (PubMed:10835343). Involved in mitophagy; may act as an adapter for ATG8 that supports mitophagosome assembly (PubMed:38964378). Negatively regulates the proteolytic processing of ATG32 via the i-AAA protease (PubMed:38964378). Acts as a negative regulator of the m-AAA protease (PubMed:10207067).</text>
</comment>
<comment type="subunit">
    <text evidence="2 3 4 10">The mitochondrial prohibitin complex consists of two subunits (PHB1 and PHB2) (PubMed:10835343, PubMed:12237468). The subunits assemble into a membrane-associated ring-shaped supercomplex of approximately 1 mDa (PubMed:10835343, PubMed:12237468). The mitochondrial prohibitin complex interacts with the m-AAA protease, a heterohexamer composed of YTA12/RCA1 and YTA10/AFG3 (PubMed:10207067). The mitochondrial prohibitin complex interacts with ATG8 and the interaction may support mitophagosome assembly (PubMed:38964378).</text>
</comment>
<comment type="interaction">
    <interactant intactId="EBI-13360">
        <id>P40961</id>
    </interactant>
    <interactant intactId="EBI-23530">
        <id>P50085</id>
        <label>PHB2</label>
    </interactant>
    <organismsDiffer>false</organismsDiffer>
    <experiments>4</experiments>
</comment>
<comment type="subcellular location">
    <subcellularLocation>
        <location evidence="2 5 7 8 10">Mitochondrion inner membrane</location>
        <topology evidence="5 7 8">Peripheral membrane protein</topology>
        <orientation evidence="5 7 8">Intermembrane side</orientation>
    </subcellularLocation>
</comment>
<comment type="PTM">
    <text>The N-terminus is blocked.</text>
</comment>
<comment type="disruption phenotype">
    <text evidence="10">Impairs mitophagy; decreases interaction between ATG11 and ATG32.</text>
</comment>
<comment type="miscellaneous">
    <text evidence="6">Present with 9690 molecules/cell in log phase SD medium.</text>
</comment>
<comment type="miscellaneous">
    <text>PHB1 subunits are targeted to mitochondria by an unconventional non-cleavable targeting sequence present at their N-terminus.</text>
</comment>
<comment type="similarity">
    <text evidence="11">Belongs to the prohibitin family.</text>
</comment>